<accession>C0JAU1</accession>
<evidence type="ECO:0000250" key="1">
    <source>
        <dbReference type="UniProtKB" id="A0A0D4WTV1"/>
    </source>
</evidence>
<evidence type="ECO:0000250" key="2">
    <source>
        <dbReference type="UniProtKB" id="A0A0D4WV12"/>
    </source>
</evidence>
<evidence type="ECO:0000250" key="3">
    <source>
        <dbReference type="UniProtKB" id="P0CE80"/>
    </source>
</evidence>
<evidence type="ECO:0000250" key="4">
    <source>
        <dbReference type="UniProtKB" id="Q4ZFU2"/>
    </source>
</evidence>
<evidence type="ECO:0000250" key="5">
    <source>
        <dbReference type="UniProtKB" id="Q8I914"/>
    </source>
</evidence>
<evidence type="ECO:0000303" key="6">
    <source>
    </source>
</evidence>
<evidence type="ECO:0000305" key="7"/>
<evidence type="ECO:0000305" key="8">
    <source>
    </source>
</evidence>
<protein>
    <recommendedName>
        <fullName evidence="6">Dermonecrotic toxin LspaSicTox-alphaIA1ii</fullName>
        <ecNumber evidence="4">4.6.1.-</ecNumber>
    </recommendedName>
    <alternativeName>
        <fullName>Phospholipase D</fullName>
        <shortName>PLD</shortName>
    </alternativeName>
    <alternativeName>
        <fullName>Sphingomyelin phosphodiesterase D</fullName>
        <shortName>SMD</shortName>
        <shortName>SMase D</shortName>
        <shortName>Sphingomyelinase D</shortName>
    </alternativeName>
</protein>
<keyword id="KW-0204">Cytolysis</keyword>
<keyword id="KW-1061">Dermonecrotic toxin</keyword>
<keyword id="KW-1015">Disulfide bond</keyword>
<keyword id="KW-0354">Hemolysis</keyword>
<keyword id="KW-0442">Lipid degradation</keyword>
<keyword id="KW-0443">Lipid metabolism</keyword>
<keyword id="KW-0456">Lyase</keyword>
<keyword id="KW-0460">Magnesium</keyword>
<keyword id="KW-0479">Metal-binding</keyword>
<keyword id="KW-0964">Secreted</keyword>
<keyword id="KW-0800">Toxin</keyword>
<name>A1H2_LOXSP</name>
<sequence>WIMGHMVNAIGQIDEFVNLGANSIETDVSFDSNANPEYTYHGIPCDCGRNCKKWENFNDFLKGLRSATTPGDSKYKEKLVLVVFDLKTGSLYDNQANDAGKKLAKNLLQHYWNNGNNGGRAYIVLSIPDLNHYPLIKGFTDTLKQEGHPELLDKLGYDFSGNDAIGDVANACKKAGVSGHVWQSDGITNCLLRGLTRVREAVANRDSGKGYINKVYYWTVDKRASTRDALDAGVDGIMTNYPDVITDVLNEAAYKSKFRVATYDDNPWETFKK</sequence>
<organism>
    <name type="scientific">Loxosceles spadicea</name>
    <name type="common">Recluse spider</name>
    <dbReference type="NCBI Taxonomy" id="571530"/>
    <lineage>
        <taxon>Eukaryota</taxon>
        <taxon>Metazoa</taxon>
        <taxon>Ecdysozoa</taxon>
        <taxon>Arthropoda</taxon>
        <taxon>Chelicerata</taxon>
        <taxon>Arachnida</taxon>
        <taxon>Araneae</taxon>
        <taxon>Araneomorphae</taxon>
        <taxon>Haplogynae</taxon>
        <taxon>Scytodoidea</taxon>
        <taxon>Sicariidae</taxon>
        <taxon>Loxosceles</taxon>
    </lineage>
</organism>
<proteinExistence type="evidence at transcript level"/>
<feature type="chain" id="PRO_0000392735" description="Dermonecrotic toxin LspaSicTox-alphaIA1ii">
    <location>
        <begin position="1" status="less than"/>
        <end position="273"/>
    </location>
</feature>
<feature type="active site" evidence="5">
    <location>
        <position position="5"/>
    </location>
</feature>
<feature type="active site" description="Nucleophile" evidence="5">
    <location>
        <position position="41"/>
    </location>
</feature>
<feature type="binding site" evidence="5">
    <location>
        <position position="25"/>
    </location>
    <ligand>
        <name>Mg(2+)</name>
        <dbReference type="ChEBI" id="CHEBI:18420"/>
    </ligand>
</feature>
<feature type="binding site" evidence="5">
    <location>
        <position position="27"/>
    </location>
    <ligand>
        <name>Mg(2+)</name>
        <dbReference type="ChEBI" id="CHEBI:18420"/>
    </ligand>
</feature>
<feature type="binding site" evidence="5">
    <location>
        <position position="85"/>
    </location>
    <ligand>
        <name>Mg(2+)</name>
        <dbReference type="ChEBI" id="CHEBI:18420"/>
    </ligand>
</feature>
<feature type="disulfide bond" evidence="3">
    <location>
        <begin position="45"/>
        <end position="51"/>
    </location>
</feature>
<feature type="disulfide bond" evidence="3">
    <location>
        <begin position="47"/>
        <end position="190"/>
    </location>
</feature>
<feature type="non-terminal residue">
    <location>
        <position position="1"/>
    </location>
</feature>
<comment type="function">
    <text evidence="1 3">Dermonecrotic toxins cleave the phosphodiester linkage between the phosphate and headgroup of certain phospholipids (sphingolipid and lysolipid substrates), forming an alcohol (often choline) and a cyclic phosphate (By similarity). This toxin acts on sphingomyelin (SM) (By similarity). It may also act on ceramide phosphoethanolamine (CPE), lysophosphatidylcholine (LPC) and lysophosphatidylethanolamine (LPE), but not on lysophosphatidylserine (LPS), and lysophosphatidylglycerol (LPG) (By similarity). It acts by transphosphatidylation, releasing exclusively cyclic phosphate products as second products (By similarity). Induces dermonecrosis, hemolysis, increased vascular permeability, edema, inflammatory response, and platelet aggregation (By similarity).</text>
</comment>
<comment type="catalytic activity">
    <reaction evidence="1">
        <text>an N-(acyl)-sphingosylphosphocholine = an N-(acyl)-sphingosyl-1,3-cyclic phosphate + choline</text>
        <dbReference type="Rhea" id="RHEA:60652"/>
        <dbReference type="ChEBI" id="CHEBI:15354"/>
        <dbReference type="ChEBI" id="CHEBI:64583"/>
        <dbReference type="ChEBI" id="CHEBI:143892"/>
    </reaction>
</comment>
<comment type="catalytic activity">
    <reaction evidence="1">
        <text>an N-(acyl)-sphingosylphosphoethanolamine = an N-(acyl)-sphingosyl-1,3-cyclic phosphate + ethanolamine</text>
        <dbReference type="Rhea" id="RHEA:60648"/>
        <dbReference type="ChEBI" id="CHEBI:57603"/>
        <dbReference type="ChEBI" id="CHEBI:143891"/>
        <dbReference type="ChEBI" id="CHEBI:143892"/>
    </reaction>
</comment>
<comment type="catalytic activity">
    <reaction evidence="1">
        <text>a 1-acyl-sn-glycero-3-phosphocholine = a 1-acyl-sn-glycero-2,3-cyclic phosphate + choline</text>
        <dbReference type="Rhea" id="RHEA:60700"/>
        <dbReference type="ChEBI" id="CHEBI:15354"/>
        <dbReference type="ChEBI" id="CHEBI:58168"/>
        <dbReference type="ChEBI" id="CHEBI:143947"/>
    </reaction>
</comment>
<comment type="catalytic activity">
    <reaction evidence="1">
        <text>a 1-acyl-sn-glycero-3-phosphoethanolamine = a 1-acyl-sn-glycero-2,3-cyclic phosphate + ethanolamine</text>
        <dbReference type="Rhea" id="RHEA:60704"/>
        <dbReference type="ChEBI" id="CHEBI:57603"/>
        <dbReference type="ChEBI" id="CHEBI:64381"/>
        <dbReference type="ChEBI" id="CHEBI:143947"/>
    </reaction>
</comment>
<comment type="cofactor">
    <cofactor evidence="5">
        <name>Mg(2+)</name>
        <dbReference type="ChEBI" id="CHEBI:18420"/>
    </cofactor>
    <text evidence="5">Binds 1 Mg(2+) ion per subunit.</text>
</comment>
<comment type="subcellular location">
    <subcellularLocation>
        <location evidence="8">Secreted</location>
    </subcellularLocation>
</comment>
<comment type="tissue specificity">
    <text evidence="8">Expressed by the venom gland.</text>
</comment>
<comment type="similarity">
    <text evidence="7">Belongs to the arthropod phospholipase D family. Class II subfamily.</text>
</comment>
<comment type="caution">
    <text evidence="1 2 4">The most common activity assay for dermonecrotic toxins detects enzymatic activity by monitoring choline release from substrate. Liberation of choline from sphingomyelin (SM) or lysophosphatidylcholine (LPC) is commonly assumed to result from substrate hydrolysis, giving either ceramide-1-phosphate (C1P) or lysophosphatidic acid (LPA), respectively, as a second product. However, two studies from Lajoie and colleagues (2013 and 2015) report the observation of exclusive formation of cyclic phosphate products as second products, resulting from intramolecular transphosphatidylation. Cyclic phosphates have vastly different biological properties from their monoester counterparts, and they may be relevant to the pathology of brown spider envenomation.</text>
</comment>
<reference key="1">
    <citation type="journal article" date="2009" name="Mol. Biol. Evol.">
        <title>Molecular evolution, functional variation, and proposed nomenclature of the gene family that includes sphingomyelinase D in sicariid spider venoms.</title>
        <authorList>
            <person name="Binford G.J."/>
            <person name="Bodner M.R."/>
            <person name="Cordes M.H."/>
            <person name="Baldwin K.L."/>
            <person name="Rynerson M.R."/>
            <person name="Burns S.N."/>
            <person name="Zobel-Thropp P.A."/>
        </authorList>
    </citation>
    <scope>NUCLEOTIDE SEQUENCE [MRNA]</scope>
    <scope>NOMENCLATURE</scope>
    <source>
        <tissue>Venom gland</tissue>
    </source>
</reference>
<dbReference type="EC" id="4.6.1.-" evidence="4"/>
<dbReference type="EMBL" id="FJ171376">
    <property type="protein sequence ID" value="ACN48872.1"/>
    <property type="molecule type" value="mRNA"/>
</dbReference>
<dbReference type="SMR" id="C0JAU1"/>
<dbReference type="GO" id="GO:0005576">
    <property type="term" value="C:extracellular region"/>
    <property type="evidence" value="ECO:0007669"/>
    <property type="project" value="UniProtKB-SubCell"/>
</dbReference>
<dbReference type="GO" id="GO:0016829">
    <property type="term" value="F:lyase activity"/>
    <property type="evidence" value="ECO:0007669"/>
    <property type="project" value="UniProtKB-KW"/>
</dbReference>
<dbReference type="GO" id="GO:0046872">
    <property type="term" value="F:metal ion binding"/>
    <property type="evidence" value="ECO:0007669"/>
    <property type="project" value="UniProtKB-KW"/>
</dbReference>
<dbReference type="GO" id="GO:0008081">
    <property type="term" value="F:phosphoric diester hydrolase activity"/>
    <property type="evidence" value="ECO:0007669"/>
    <property type="project" value="InterPro"/>
</dbReference>
<dbReference type="GO" id="GO:0090729">
    <property type="term" value="F:toxin activity"/>
    <property type="evidence" value="ECO:0007669"/>
    <property type="project" value="UniProtKB-KW"/>
</dbReference>
<dbReference type="GO" id="GO:0031640">
    <property type="term" value="P:killing of cells of another organism"/>
    <property type="evidence" value="ECO:0007669"/>
    <property type="project" value="UniProtKB-KW"/>
</dbReference>
<dbReference type="GO" id="GO:0016042">
    <property type="term" value="P:lipid catabolic process"/>
    <property type="evidence" value="ECO:0007669"/>
    <property type="project" value="UniProtKB-KW"/>
</dbReference>
<dbReference type="CDD" id="cd08576">
    <property type="entry name" value="GDPD_like_SMaseD_PLD"/>
    <property type="match status" value="1"/>
</dbReference>
<dbReference type="Gene3D" id="3.20.20.190">
    <property type="entry name" value="Phosphatidylinositol (PI) phosphodiesterase"/>
    <property type="match status" value="1"/>
</dbReference>
<dbReference type="InterPro" id="IPR017946">
    <property type="entry name" value="PLC-like_Pdiesterase_TIM-brl"/>
</dbReference>
<dbReference type="Pfam" id="PF13653">
    <property type="entry name" value="GDPD_2"/>
    <property type="match status" value="1"/>
</dbReference>
<dbReference type="SUPFAM" id="SSF51695">
    <property type="entry name" value="PLC-like phosphodiesterases"/>
    <property type="match status" value="1"/>
</dbReference>